<protein>
    <recommendedName>
        <fullName evidence="5">Collagen alpha-1(I) chain</fullName>
    </recommendedName>
    <alternativeName>
        <fullName evidence="1">Alpha-1 type I collagen</fullName>
    </alternativeName>
</protein>
<feature type="chain" id="PRO_0000433497" description="Collagen alpha-1(I) chain" evidence="4">
    <location>
        <begin position="1"/>
        <end position="987"/>
    </location>
</feature>
<feature type="region of interest" description="Disordered" evidence="3">
    <location>
        <begin position="1"/>
        <end position="987"/>
    </location>
</feature>
<feature type="compositionally biased region" description="Low complexity" evidence="3">
    <location>
        <begin position="20"/>
        <end position="39"/>
    </location>
</feature>
<feature type="compositionally biased region" description="Basic and acidic residues" evidence="3">
    <location>
        <begin position="51"/>
        <end position="65"/>
    </location>
</feature>
<feature type="compositionally biased region" description="Low complexity" evidence="3">
    <location>
        <begin position="101"/>
        <end position="117"/>
    </location>
</feature>
<feature type="compositionally biased region" description="Low complexity" evidence="3">
    <location>
        <begin position="141"/>
        <end position="153"/>
    </location>
</feature>
<feature type="compositionally biased region" description="Pro residues" evidence="3">
    <location>
        <begin position="155"/>
        <end position="167"/>
    </location>
</feature>
<feature type="compositionally biased region" description="Low complexity" evidence="3">
    <location>
        <begin position="201"/>
        <end position="251"/>
    </location>
</feature>
<feature type="compositionally biased region" description="Low complexity" evidence="3">
    <location>
        <begin position="354"/>
        <end position="380"/>
    </location>
</feature>
<feature type="compositionally biased region" description="Low complexity" evidence="3">
    <location>
        <begin position="389"/>
        <end position="408"/>
    </location>
</feature>
<feature type="compositionally biased region" description="Low complexity" evidence="3">
    <location>
        <begin position="422"/>
        <end position="444"/>
    </location>
</feature>
<feature type="compositionally biased region" description="Low complexity" evidence="3">
    <location>
        <begin position="516"/>
        <end position="543"/>
    </location>
</feature>
<feature type="compositionally biased region" description="Low complexity" evidence="3">
    <location>
        <begin position="602"/>
        <end position="614"/>
    </location>
</feature>
<feature type="compositionally biased region" description="Low complexity" evidence="3">
    <location>
        <begin position="627"/>
        <end position="654"/>
    </location>
</feature>
<feature type="compositionally biased region" description="Low complexity" evidence="3">
    <location>
        <begin position="662"/>
        <end position="677"/>
    </location>
</feature>
<feature type="compositionally biased region" description="Low complexity" evidence="3">
    <location>
        <begin position="686"/>
        <end position="696"/>
    </location>
</feature>
<feature type="compositionally biased region" description="Low complexity" evidence="3">
    <location>
        <begin position="737"/>
        <end position="752"/>
    </location>
</feature>
<feature type="compositionally biased region" description="Gly residues" evidence="3">
    <location>
        <begin position="756"/>
        <end position="765"/>
    </location>
</feature>
<feature type="compositionally biased region" description="Pro residues" evidence="3">
    <location>
        <begin position="799"/>
        <end position="809"/>
    </location>
</feature>
<feature type="compositionally biased region" description="Low complexity" evidence="3">
    <location>
        <begin position="811"/>
        <end position="826"/>
    </location>
</feature>
<feature type="compositionally biased region" description="Pro residues" evidence="3">
    <location>
        <begin position="845"/>
        <end position="860"/>
    </location>
</feature>
<feature type="compositionally biased region" description="Basic and acidic residues" evidence="3">
    <location>
        <begin position="896"/>
        <end position="907"/>
    </location>
</feature>
<feature type="compositionally biased region" description="Low complexity" evidence="3">
    <location>
        <begin position="923"/>
        <end position="956"/>
    </location>
</feature>
<feature type="compositionally biased region" description="Pro residues" evidence="3">
    <location>
        <begin position="972"/>
        <end position="987"/>
    </location>
</feature>
<feature type="modified residue" description="Phosphoserine" evidence="2">
    <location>
        <position position="93"/>
    </location>
</feature>
<feature type="unsure residue" description="I or L" evidence="4">
    <location>
        <position position="11"/>
    </location>
</feature>
<feature type="unsure residue" description="I or L" evidence="4">
    <location>
        <position position="77"/>
    </location>
</feature>
<feature type="unsure residue" description="I or L" evidence="4">
    <location>
        <position position="83"/>
    </location>
</feature>
<feature type="unsure residue" description="I or L" evidence="4">
    <location>
        <position position="95"/>
    </location>
</feature>
<feature type="unsure residue" description="I or L" evidence="4">
    <location>
        <position position="128"/>
    </location>
</feature>
<feature type="unsure residue" description="I or L" evidence="4">
    <location>
        <position position="227"/>
    </location>
</feature>
<feature type="unsure residue" description="I or L" evidence="4">
    <location>
        <position position="278"/>
    </location>
</feature>
<feature type="unsure residue" description="I or L" evidence="4">
    <location>
        <position position="302"/>
    </location>
</feature>
<feature type="unsure residue" description="I or L" evidence="4">
    <location>
        <position position="350"/>
    </location>
</feature>
<feature type="unsure residue" description="I or L" evidence="4">
    <location>
        <position position="356"/>
    </location>
</feature>
<feature type="unsure residue" description="I or L" evidence="4">
    <location>
        <position position="461"/>
    </location>
</feature>
<feature type="unsure residue" description="I or L" evidence="4">
    <location>
        <position position="479"/>
    </location>
</feature>
<feature type="unsure residue" description="I or L" evidence="4">
    <location>
        <position position="483"/>
    </location>
</feature>
<feature type="unsure residue" description="I or L" evidence="4">
    <location>
        <position position="542"/>
    </location>
</feature>
<feature type="unsure residue" description="I or L" evidence="4">
    <location>
        <position position="554"/>
    </location>
</feature>
<feature type="unsure residue" description="I or L" evidence="4">
    <location>
        <position position="581"/>
    </location>
</feature>
<feature type="unsure residue" description="I or L" evidence="4">
    <location>
        <position position="585"/>
    </location>
</feature>
<feature type="unsure residue" description="I or L" evidence="4">
    <location>
        <position position="669"/>
    </location>
</feature>
<feature type="unsure residue" description="I or L" evidence="4">
    <location>
        <position position="728"/>
    </location>
</feature>
<feature type="unsure residue" description="I or L" evidence="4">
    <location>
        <position position="760"/>
    </location>
</feature>
<feature type="unsure residue" description="I or L" evidence="4">
    <location>
        <position position="769"/>
    </location>
</feature>
<feature type="unsure residue" description="I or L" evidence="4">
    <location>
        <position position="778"/>
    </location>
</feature>
<feature type="unsure residue" description="I or L" evidence="4">
    <location>
        <position position="808"/>
    </location>
</feature>
<feature type="unsure residue" description="I or L" evidence="4">
    <location>
        <position position="881"/>
    </location>
</feature>
<feature type="unsure residue" description="I or L" evidence="4">
    <location>
        <position position="913"/>
    </location>
</feature>
<feature type="unsure residue" description="I or L" evidence="4">
    <location>
        <position position="952"/>
    </location>
</feature>
<feature type="unsure residue" description="I or L" evidence="4">
    <location>
        <position position="955"/>
    </location>
</feature>
<feature type="unsure residue" description="I or L" evidence="4">
    <location>
        <position position="959"/>
    </location>
</feature>
<feature type="non-consecutive residues" evidence="5">
    <location>
        <begin position="309"/>
        <end position="310"/>
    </location>
</feature>
<feature type="non-consecutive residues" evidence="5">
    <location>
        <begin position="678"/>
        <end position="679"/>
    </location>
</feature>
<feature type="non-consecutive residues" evidence="5">
    <location>
        <begin position="716"/>
        <end position="717"/>
    </location>
</feature>
<feature type="non-consecutive residues" evidence="5">
    <location>
        <begin position="773"/>
        <end position="774"/>
    </location>
</feature>
<feature type="non-consecutive residues" evidence="5">
    <location>
        <begin position="908"/>
        <end position="909"/>
    </location>
</feature>
<feature type="non-consecutive residues" evidence="5">
    <location>
        <begin position="965"/>
        <end position="966"/>
    </location>
</feature>
<evidence type="ECO:0000250" key="1">
    <source>
        <dbReference type="UniProtKB" id="P02452"/>
    </source>
</evidence>
<evidence type="ECO:0000250" key="2">
    <source>
        <dbReference type="UniProtKB" id="P02454"/>
    </source>
</evidence>
<evidence type="ECO:0000256" key="3">
    <source>
        <dbReference type="SAM" id="MobiDB-lite"/>
    </source>
</evidence>
<evidence type="ECO:0000269" key="4">
    <source>
    </source>
</evidence>
<evidence type="ECO:0000303" key="5">
    <source>
    </source>
</evidence>
<evidence type="ECO:0000305" key="6"/>
<dbReference type="GO" id="GO:0005581">
    <property type="term" value="C:collagen trimer"/>
    <property type="evidence" value="ECO:0007669"/>
    <property type="project" value="UniProtKB-KW"/>
</dbReference>
<dbReference type="GO" id="GO:0031012">
    <property type="term" value="C:extracellular matrix"/>
    <property type="evidence" value="ECO:0007669"/>
    <property type="project" value="TreeGrafter"/>
</dbReference>
<dbReference type="GO" id="GO:0005615">
    <property type="term" value="C:extracellular space"/>
    <property type="evidence" value="ECO:0007669"/>
    <property type="project" value="TreeGrafter"/>
</dbReference>
<dbReference type="GO" id="GO:0030020">
    <property type="term" value="F:extracellular matrix structural constituent conferring tensile strength"/>
    <property type="evidence" value="ECO:0007669"/>
    <property type="project" value="TreeGrafter"/>
</dbReference>
<dbReference type="GO" id="GO:0030198">
    <property type="term" value="P:extracellular matrix organization"/>
    <property type="evidence" value="ECO:0007669"/>
    <property type="project" value="TreeGrafter"/>
</dbReference>
<dbReference type="InterPro" id="IPR008160">
    <property type="entry name" value="Collagen"/>
</dbReference>
<dbReference type="InterPro" id="IPR050149">
    <property type="entry name" value="Collagen_superfamily"/>
</dbReference>
<dbReference type="PANTHER" id="PTHR24023:SF1112">
    <property type="entry name" value="COL_CUTICLE_N DOMAIN-CONTAINING PROTEIN-RELATED"/>
    <property type="match status" value="1"/>
</dbReference>
<dbReference type="PANTHER" id="PTHR24023">
    <property type="entry name" value="COLLAGEN ALPHA"/>
    <property type="match status" value="1"/>
</dbReference>
<dbReference type="Pfam" id="PF01391">
    <property type="entry name" value="Collagen"/>
    <property type="match status" value="9"/>
</dbReference>
<organism evidence="5">
    <name type="scientific">Orycteropus afer</name>
    <name type="common">Aardvark</name>
    <dbReference type="NCBI Taxonomy" id="9818"/>
    <lineage>
        <taxon>Eukaryota</taxon>
        <taxon>Metazoa</taxon>
        <taxon>Chordata</taxon>
        <taxon>Craniata</taxon>
        <taxon>Vertebrata</taxon>
        <taxon>Euteleostomi</taxon>
        <taxon>Mammalia</taxon>
        <taxon>Eutheria</taxon>
        <taxon>Afrotheria</taxon>
        <taxon>Tubulidentata</taxon>
        <taxon>Orycteropodidae</taxon>
        <taxon>Orycteropus</taxon>
    </lineage>
</organism>
<accession>C0HJN3</accession>
<proteinExistence type="evidence at protein level"/>
<gene>
    <name evidence="1" type="primary">COL1A1</name>
</gene>
<reference evidence="6" key="1">
    <citation type="journal article" date="2015" name="Nature">
        <title>Ancient proteins resolve the evolutionary history of Darwin's South American ungulates.</title>
        <authorList>
            <person name="Welker F."/>
            <person name="Collins M.J."/>
            <person name="Thomas J.A."/>
            <person name="Wadsley M."/>
            <person name="Brace S."/>
            <person name="Cappellini E."/>
            <person name="Turvey S.T."/>
            <person name="Reguero M."/>
            <person name="Gelfo J.N."/>
            <person name="Kramarz A."/>
            <person name="Burger J."/>
            <person name="Thomas-Oates J."/>
            <person name="Ashford D.A."/>
            <person name="Ashton P.D."/>
            <person name="Rowsell K."/>
            <person name="Porter D.M."/>
            <person name="Kessler B."/>
            <person name="Fischer R."/>
            <person name="Baessmann C."/>
            <person name="Kaspar S."/>
            <person name="Olsen J.V."/>
            <person name="Kiley P."/>
            <person name="Elliott J.A."/>
            <person name="Kelstrup C.D."/>
            <person name="Mullin V."/>
            <person name="Hofreiter M."/>
            <person name="Willerslev E."/>
            <person name="Hublin J.J."/>
            <person name="Orlando L."/>
            <person name="Barnes I."/>
            <person name="MacPhee R.D."/>
        </authorList>
    </citation>
    <scope>PROTEIN SEQUENCE</scope>
    <scope>IDENTIFICATION BY MASS SPECTROMETRY</scope>
    <source>
        <tissue evidence="5">Bone</tissue>
    </source>
</reference>
<keyword id="KW-0106">Calcium</keyword>
<keyword id="KW-0176">Collagen</keyword>
<keyword id="KW-0903">Direct protein sequencing</keyword>
<keyword id="KW-0272">Extracellular matrix</keyword>
<keyword id="KW-0379">Hydroxylation</keyword>
<keyword id="KW-0597">Phosphoprotein</keyword>
<keyword id="KW-0677">Repeat</keyword>
<keyword id="KW-0964">Secreted</keyword>
<name>CO1A1_ORYAF</name>
<comment type="function">
    <text evidence="6">Type I collagen is a member of group I collagen (fibrillar forming collagen).</text>
</comment>
<comment type="subunit">
    <text evidence="6">Trimers of one alpha 2(I) and two alpha 1(I) chains.</text>
</comment>
<comment type="subcellular location">
    <subcellularLocation>
        <location>Secreted</location>
    </subcellularLocation>
    <subcellularLocation>
        <location>Secreted</location>
        <location>Extracellular space</location>
    </subcellularLocation>
    <subcellularLocation>
        <location evidence="6">Secreted</location>
        <location evidence="6">Extracellular space</location>
        <location evidence="6">Extracellular matrix</location>
    </subcellularLocation>
</comment>
<comment type="tissue specificity">
    <text evidence="6">Forms the fibrils of tendon, ligaments and bones. In bones, the fibrils are mineralized with calcium hydroxyapatite.</text>
</comment>
<comment type="PTM">
    <text evidence="6">Prolines at the third position of the tripeptide repeating unit (G-X-Y) are hydroxylated in some or all of the chains.</text>
</comment>
<comment type="similarity">
    <text evidence="6">Belongs to the fibrillar collagen family.</text>
</comment>
<sequence length="987" mass="87663">GPMGPSGPRGIPGPPGAPGPQGFQGPPGEPGEPGASGPMGPRGPPGPPGKNGDDGEAGKPGRPGERGPPGPQGARGIPGTAGIPGMKGHRGFSGIDGAKGDAGPAGPKGEPGSPGENGAPGQMGPRGIPGERGRPGPPGPAGARGNDGATGAAGPPGPTGPAGPPGFPGAVGAKGEAGPQGPRGSEGPQGVRGEPGPPGPAGAAGPAGNPGADGQPGAKGANGAPGIAGAPGFPGARGPSGPQGPSGAPGPKGNSGEPGAPGNKGDAGAKGEPGPAGIQGPPGPAGEEGKRGARGEPGPTGIPGPPGERGFPGSDGVAGPKGPVGERGSPGPAGPKGSPGEAGRPGEAGIPGAKGITGSPGSPGPDGKTGPPGPAGQDGRPGPPGPPGARGQAGVMGFPGPKGAAGEPGKAGERGVPGPPGAVGAPGKDGEAGAPGATGPAGPAGERGEQGPAGSPGFQGIPGPAGPPGESGKPGEQGIPGDIGAPGPSGARGERGFPGERGVQGPPGPAGPRGSNGAPGNDGAKGDAGAPGAPGSQGAPGIQGMPGERGAAGIPGPKGDRGDAGPKGADGSPGKDGPRGITGPIGPPGPAGAPGDKGESGPNGPAGPTGARGAPGDRGEPGPPGPAGFAGPPGADGQPGAKGEPGDAGAKGDAGPPGPAGPTGAPGPIGNVGAPGPKGSPGPPGATGFPGAAGRVGPPGPSGNAGPPGPPGPAGKGETGPAGRPGEIGPPGPPGPSGEKGSPGADGPAGAPGTPGPQGIGGQRGVVGIPGQRGFPGIPGPSGEPGKQGPSGPNGERGPPGPMGPPGIAGPPGESGREGSPGAEGSPGRDGSPGPKGDRGETGPAGPPGAPGAPGAPGPVGPAGKSGDRGETGPAGPAGPIGPVGARGPTGPQGPRGDKGETGEQGDRGFSGIQGPPGPPGSPGEQGPSGASGPAGPRGPPGSAGAPGKDGINGIPGPIGPPGPRTGDAGPVGPPGPPGPPGPPGPP</sequence>